<gene>
    <name evidence="1" type="primary">rplK</name>
    <name type="ordered locus">BMEA_A1292</name>
</gene>
<proteinExistence type="inferred from homology"/>
<protein>
    <recommendedName>
        <fullName evidence="1">Large ribosomal subunit protein uL11</fullName>
    </recommendedName>
    <alternativeName>
        <fullName evidence="2">50S ribosomal protein L11</fullName>
    </alternativeName>
</protein>
<comment type="function">
    <text evidence="1">Forms part of the ribosomal stalk which helps the ribosome interact with GTP-bound translation factors.</text>
</comment>
<comment type="subunit">
    <text evidence="1">Part of the ribosomal stalk of the 50S ribosomal subunit. Interacts with L10 and the large rRNA to form the base of the stalk. L10 forms an elongated spine to which L12 dimers bind in a sequential fashion forming a multimeric L10(L12)X complex.</text>
</comment>
<comment type="PTM">
    <text evidence="1">One or more lysine residues are methylated.</text>
</comment>
<comment type="similarity">
    <text evidence="1">Belongs to the universal ribosomal protein uL11 family.</text>
</comment>
<reference key="1">
    <citation type="submission" date="2009-03" db="EMBL/GenBank/DDBJ databases">
        <title>Brucella melitensis ATCC 23457 whole genome shotgun sequencing project.</title>
        <authorList>
            <person name="Setubal J.C."/>
            <person name="Boyle S."/>
            <person name="Crasta O.R."/>
            <person name="Gillespie J.J."/>
            <person name="Kenyon R.W."/>
            <person name="Lu J."/>
            <person name="Mane S."/>
            <person name="Nagrani S."/>
            <person name="Shallom J.M."/>
            <person name="Shallom S."/>
            <person name="Shukla M."/>
            <person name="Snyder E.E."/>
            <person name="Sobral B.W."/>
            <person name="Wattam A.R."/>
            <person name="Will R."/>
            <person name="Williams K."/>
            <person name="Yoo H."/>
            <person name="Munk C."/>
            <person name="Tapia R."/>
            <person name="Han C."/>
            <person name="Detter J.C."/>
            <person name="Bruce D."/>
            <person name="Brettin T.S."/>
        </authorList>
    </citation>
    <scope>NUCLEOTIDE SEQUENCE [LARGE SCALE GENOMIC DNA]</scope>
    <source>
        <strain>ATCC 23457</strain>
    </source>
</reference>
<evidence type="ECO:0000255" key="1">
    <source>
        <dbReference type="HAMAP-Rule" id="MF_00736"/>
    </source>
</evidence>
<evidence type="ECO:0000305" key="2"/>
<sequence length="142" mass="15018">MAKKVAGQLKLQVPAGAANPSPPIGPALGQRGINIMEFCKAFNAASQEMEKGSPIPVLITYYQDKSFTFVMKTPPVTYFLKKAANLKSGSKTPGKASAGTITRDKVRAIAEAKMKDLNAADVEAAMRMIEGSARSMGLEVVG</sequence>
<feature type="chain" id="PRO_1000195587" description="Large ribosomal subunit protein uL11">
    <location>
        <begin position="1"/>
        <end position="142"/>
    </location>
</feature>
<organism>
    <name type="scientific">Brucella melitensis biotype 2 (strain ATCC 23457)</name>
    <dbReference type="NCBI Taxonomy" id="546272"/>
    <lineage>
        <taxon>Bacteria</taxon>
        <taxon>Pseudomonadati</taxon>
        <taxon>Pseudomonadota</taxon>
        <taxon>Alphaproteobacteria</taxon>
        <taxon>Hyphomicrobiales</taxon>
        <taxon>Brucellaceae</taxon>
        <taxon>Brucella/Ochrobactrum group</taxon>
        <taxon>Brucella</taxon>
    </lineage>
</organism>
<name>RL11_BRUMB</name>
<keyword id="KW-0488">Methylation</keyword>
<keyword id="KW-0687">Ribonucleoprotein</keyword>
<keyword id="KW-0689">Ribosomal protein</keyword>
<keyword id="KW-0694">RNA-binding</keyword>
<keyword id="KW-0699">rRNA-binding</keyword>
<dbReference type="EMBL" id="CP001488">
    <property type="protein sequence ID" value="ACO01023.1"/>
    <property type="molecule type" value="Genomic_DNA"/>
</dbReference>
<dbReference type="RefSeq" id="WP_002964374.1">
    <property type="nucleotide sequence ID" value="NC_012441.1"/>
</dbReference>
<dbReference type="SMR" id="C0RJL5"/>
<dbReference type="GeneID" id="97533513"/>
<dbReference type="KEGG" id="bmi:BMEA_A1292"/>
<dbReference type="HOGENOM" id="CLU_074237_2_0_5"/>
<dbReference type="Proteomes" id="UP000001748">
    <property type="component" value="Chromosome I"/>
</dbReference>
<dbReference type="GO" id="GO:0022625">
    <property type="term" value="C:cytosolic large ribosomal subunit"/>
    <property type="evidence" value="ECO:0007669"/>
    <property type="project" value="TreeGrafter"/>
</dbReference>
<dbReference type="GO" id="GO:0070180">
    <property type="term" value="F:large ribosomal subunit rRNA binding"/>
    <property type="evidence" value="ECO:0007669"/>
    <property type="project" value="UniProtKB-UniRule"/>
</dbReference>
<dbReference type="GO" id="GO:0003735">
    <property type="term" value="F:structural constituent of ribosome"/>
    <property type="evidence" value="ECO:0007669"/>
    <property type="project" value="InterPro"/>
</dbReference>
<dbReference type="GO" id="GO:0006412">
    <property type="term" value="P:translation"/>
    <property type="evidence" value="ECO:0007669"/>
    <property type="project" value="UniProtKB-UniRule"/>
</dbReference>
<dbReference type="CDD" id="cd00349">
    <property type="entry name" value="Ribosomal_L11"/>
    <property type="match status" value="1"/>
</dbReference>
<dbReference type="FunFam" id="1.10.10.250:FF:000001">
    <property type="entry name" value="50S ribosomal protein L11"/>
    <property type="match status" value="1"/>
</dbReference>
<dbReference type="FunFam" id="3.30.1550.10:FF:000001">
    <property type="entry name" value="50S ribosomal protein L11"/>
    <property type="match status" value="1"/>
</dbReference>
<dbReference type="Gene3D" id="1.10.10.250">
    <property type="entry name" value="Ribosomal protein L11, C-terminal domain"/>
    <property type="match status" value="1"/>
</dbReference>
<dbReference type="Gene3D" id="3.30.1550.10">
    <property type="entry name" value="Ribosomal protein L11/L12, N-terminal domain"/>
    <property type="match status" value="1"/>
</dbReference>
<dbReference type="HAMAP" id="MF_00736">
    <property type="entry name" value="Ribosomal_uL11"/>
    <property type="match status" value="1"/>
</dbReference>
<dbReference type="InterPro" id="IPR000911">
    <property type="entry name" value="Ribosomal_uL11"/>
</dbReference>
<dbReference type="InterPro" id="IPR006519">
    <property type="entry name" value="Ribosomal_uL11_bac-typ"/>
</dbReference>
<dbReference type="InterPro" id="IPR020783">
    <property type="entry name" value="Ribosomal_uL11_C"/>
</dbReference>
<dbReference type="InterPro" id="IPR036769">
    <property type="entry name" value="Ribosomal_uL11_C_sf"/>
</dbReference>
<dbReference type="InterPro" id="IPR020785">
    <property type="entry name" value="Ribosomal_uL11_CS"/>
</dbReference>
<dbReference type="InterPro" id="IPR020784">
    <property type="entry name" value="Ribosomal_uL11_N"/>
</dbReference>
<dbReference type="InterPro" id="IPR036796">
    <property type="entry name" value="Ribosomal_uL11_N_sf"/>
</dbReference>
<dbReference type="NCBIfam" id="TIGR01632">
    <property type="entry name" value="L11_bact"/>
    <property type="match status" value="1"/>
</dbReference>
<dbReference type="PANTHER" id="PTHR11661">
    <property type="entry name" value="60S RIBOSOMAL PROTEIN L12"/>
    <property type="match status" value="1"/>
</dbReference>
<dbReference type="PANTHER" id="PTHR11661:SF1">
    <property type="entry name" value="LARGE RIBOSOMAL SUBUNIT PROTEIN UL11M"/>
    <property type="match status" value="1"/>
</dbReference>
<dbReference type="Pfam" id="PF00298">
    <property type="entry name" value="Ribosomal_L11"/>
    <property type="match status" value="1"/>
</dbReference>
<dbReference type="Pfam" id="PF03946">
    <property type="entry name" value="Ribosomal_L11_N"/>
    <property type="match status" value="1"/>
</dbReference>
<dbReference type="SMART" id="SM00649">
    <property type="entry name" value="RL11"/>
    <property type="match status" value="1"/>
</dbReference>
<dbReference type="SUPFAM" id="SSF54747">
    <property type="entry name" value="Ribosomal L11/L12e N-terminal domain"/>
    <property type="match status" value="1"/>
</dbReference>
<dbReference type="SUPFAM" id="SSF46906">
    <property type="entry name" value="Ribosomal protein L11, C-terminal domain"/>
    <property type="match status" value="1"/>
</dbReference>
<dbReference type="PROSITE" id="PS00359">
    <property type="entry name" value="RIBOSOMAL_L11"/>
    <property type="match status" value="1"/>
</dbReference>
<accession>C0RJL5</accession>